<organism>
    <name type="scientific">Shouchella clausii (strain KSM-K16)</name>
    <name type="common">Alkalihalobacillus clausii</name>
    <dbReference type="NCBI Taxonomy" id="66692"/>
    <lineage>
        <taxon>Bacteria</taxon>
        <taxon>Bacillati</taxon>
        <taxon>Bacillota</taxon>
        <taxon>Bacilli</taxon>
        <taxon>Bacillales</taxon>
        <taxon>Bacillaceae</taxon>
        <taxon>Shouchella</taxon>
    </lineage>
</organism>
<protein>
    <recommendedName>
        <fullName evidence="1">NAD kinase</fullName>
        <ecNumber evidence="1">2.7.1.23</ecNumber>
    </recommendedName>
    <alternativeName>
        <fullName evidence="1">ATP-dependent NAD kinase</fullName>
    </alternativeName>
</protein>
<dbReference type="EC" id="2.7.1.23" evidence="1"/>
<dbReference type="EMBL" id="AP006627">
    <property type="protein sequence ID" value="BAD65054.1"/>
    <property type="molecule type" value="Genomic_DNA"/>
</dbReference>
<dbReference type="RefSeq" id="WP_011247362.1">
    <property type="nucleotide sequence ID" value="NC_006582.1"/>
</dbReference>
<dbReference type="SMR" id="Q5WF06"/>
<dbReference type="STRING" id="66692.ABC2519"/>
<dbReference type="KEGG" id="bcl:ABC2519"/>
<dbReference type="eggNOG" id="COG0061">
    <property type="taxonomic scope" value="Bacteria"/>
</dbReference>
<dbReference type="HOGENOM" id="CLU_008831_0_3_9"/>
<dbReference type="OrthoDB" id="9774737at2"/>
<dbReference type="Proteomes" id="UP000001168">
    <property type="component" value="Chromosome"/>
</dbReference>
<dbReference type="GO" id="GO:0005737">
    <property type="term" value="C:cytoplasm"/>
    <property type="evidence" value="ECO:0007669"/>
    <property type="project" value="UniProtKB-SubCell"/>
</dbReference>
<dbReference type="GO" id="GO:0005524">
    <property type="term" value="F:ATP binding"/>
    <property type="evidence" value="ECO:0007669"/>
    <property type="project" value="UniProtKB-KW"/>
</dbReference>
<dbReference type="GO" id="GO:0046872">
    <property type="term" value="F:metal ion binding"/>
    <property type="evidence" value="ECO:0007669"/>
    <property type="project" value="UniProtKB-UniRule"/>
</dbReference>
<dbReference type="GO" id="GO:0051287">
    <property type="term" value="F:NAD binding"/>
    <property type="evidence" value="ECO:0007669"/>
    <property type="project" value="UniProtKB-ARBA"/>
</dbReference>
<dbReference type="GO" id="GO:0003951">
    <property type="term" value="F:NAD+ kinase activity"/>
    <property type="evidence" value="ECO:0007669"/>
    <property type="project" value="UniProtKB-UniRule"/>
</dbReference>
<dbReference type="GO" id="GO:0019674">
    <property type="term" value="P:NAD metabolic process"/>
    <property type="evidence" value="ECO:0007669"/>
    <property type="project" value="InterPro"/>
</dbReference>
<dbReference type="GO" id="GO:0006741">
    <property type="term" value="P:NADP biosynthetic process"/>
    <property type="evidence" value="ECO:0007669"/>
    <property type="project" value="UniProtKB-UniRule"/>
</dbReference>
<dbReference type="FunFam" id="2.60.200.30:FF:000002">
    <property type="entry name" value="NAD kinase"/>
    <property type="match status" value="1"/>
</dbReference>
<dbReference type="Gene3D" id="3.40.50.10330">
    <property type="entry name" value="Probable inorganic polyphosphate/atp-NAD kinase, domain 1"/>
    <property type="match status" value="1"/>
</dbReference>
<dbReference type="Gene3D" id="2.60.200.30">
    <property type="entry name" value="Probable inorganic polyphosphate/atp-NAD kinase, domain 2"/>
    <property type="match status" value="1"/>
</dbReference>
<dbReference type="HAMAP" id="MF_00361">
    <property type="entry name" value="NAD_kinase"/>
    <property type="match status" value="1"/>
</dbReference>
<dbReference type="InterPro" id="IPR017438">
    <property type="entry name" value="ATP-NAD_kinase_N"/>
</dbReference>
<dbReference type="InterPro" id="IPR017437">
    <property type="entry name" value="ATP-NAD_kinase_PpnK-typ_C"/>
</dbReference>
<dbReference type="InterPro" id="IPR016064">
    <property type="entry name" value="NAD/diacylglycerol_kinase_sf"/>
</dbReference>
<dbReference type="InterPro" id="IPR002504">
    <property type="entry name" value="NADK"/>
</dbReference>
<dbReference type="NCBIfam" id="NF003424">
    <property type="entry name" value="PRK04885.1"/>
    <property type="match status" value="1"/>
</dbReference>
<dbReference type="PANTHER" id="PTHR20275">
    <property type="entry name" value="NAD KINASE"/>
    <property type="match status" value="1"/>
</dbReference>
<dbReference type="PANTHER" id="PTHR20275:SF0">
    <property type="entry name" value="NAD KINASE"/>
    <property type="match status" value="1"/>
</dbReference>
<dbReference type="Pfam" id="PF01513">
    <property type="entry name" value="NAD_kinase"/>
    <property type="match status" value="1"/>
</dbReference>
<dbReference type="Pfam" id="PF20143">
    <property type="entry name" value="NAD_kinase_C"/>
    <property type="match status" value="1"/>
</dbReference>
<dbReference type="SUPFAM" id="SSF111331">
    <property type="entry name" value="NAD kinase/diacylglycerol kinase-like"/>
    <property type="match status" value="1"/>
</dbReference>
<accession>Q5WF06</accession>
<comment type="function">
    <text evidence="1">Involved in the regulation of the intracellular balance of NAD and NADP, and is a key enzyme in the biosynthesis of NADP. Catalyzes specifically the phosphorylation on 2'-hydroxyl of the adenosine moiety of NAD to yield NADP.</text>
</comment>
<comment type="catalytic activity">
    <reaction evidence="1">
        <text>NAD(+) + ATP = ADP + NADP(+) + H(+)</text>
        <dbReference type="Rhea" id="RHEA:18629"/>
        <dbReference type="ChEBI" id="CHEBI:15378"/>
        <dbReference type="ChEBI" id="CHEBI:30616"/>
        <dbReference type="ChEBI" id="CHEBI:57540"/>
        <dbReference type="ChEBI" id="CHEBI:58349"/>
        <dbReference type="ChEBI" id="CHEBI:456216"/>
        <dbReference type="EC" id="2.7.1.23"/>
    </reaction>
</comment>
<comment type="cofactor">
    <cofactor evidence="1">
        <name>a divalent metal cation</name>
        <dbReference type="ChEBI" id="CHEBI:60240"/>
    </cofactor>
</comment>
<comment type="subcellular location">
    <subcellularLocation>
        <location evidence="1">Cytoplasm</location>
    </subcellularLocation>
</comment>
<comment type="similarity">
    <text evidence="1">Belongs to the NAD kinase family.</text>
</comment>
<evidence type="ECO:0000255" key="1">
    <source>
        <dbReference type="HAMAP-Rule" id="MF_00361"/>
    </source>
</evidence>
<proteinExistence type="inferred from homology"/>
<reference key="1">
    <citation type="submission" date="2003-10" db="EMBL/GenBank/DDBJ databases">
        <title>The complete genome sequence of the alkaliphilic Bacillus clausii KSM-K16.</title>
        <authorList>
            <person name="Takaki Y."/>
            <person name="Kageyama Y."/>
            <person name="Shimamura S."/>
            <person name="Suzuki H."/>
            <person name="Nishi S."/>
            <person name="Hatada Y."/>
            <person name="Kawai S."/>
            <person name="Ito S."/>
            <person name="Horikoshi K."/>
        </authorList>
    </citation>
    <scope>NUCLEOTIDE SEQUENCE [LARGE SCALE GENOMIC DNA]</scope>
    <source>
        <strain>KSM-K16</strain>
    </source>
</reference>
<gene>
    <name evidence="1" type="primary">nadK</name>
    <name type="ordered locus">ABC2519</name>
</gene>
<keyword id="KW-0067">ATP-binding</keyword>
<keyword id="KW-0963">Cytoplasm</keyword>
<keyword id="KW-0418">Kinase</keyword>
<keyword id="KW-0520">NAD</keyword>
<keyword id="KW-0521">NADP</keyword>
<keyword id="KW-0547">Nucleotide-binding</keyword>
<keyword id="KW-1185">Reference proteome</keyword>
<keyword id="KW-0808">Transferase</keyword>
<name>NADK_SHOC1</name>
<feature type="chain" id="PRO_0000229603" description="NAD kinase">
    <location>
        <begin position="1"/>
        <end position="267"/>
    </location>
</feature>
<feature type="active site" description="Proton acceptor" evidence="1">
    <location>
        <position position="45"/>
    </location>
</feature>
<feature type="binding site" evidence="1">
    <location>
        <begin position="45"/>
        <end position="46"/>
    </location>
    <ligand>
        <name>NAD(+)</name>
        <dbReference type="ChEBI" id="CHEBI:57540"/>
    </ligand>
</feature>
<feature type="binding site" evidence="1">
    <location>
        <begin position="123"/>
        <end position="124"/>
    </location>
    <ligand>
        <name>NAD(+)</name>
        <dbReference type="ChEBI" id="CHEBI:57540"/>
    </ligand>
</feature>
<feature type="binding site" evidence="1">
    <location>
        <position position="149"/>
    </location>
    <ligand>
        <name>NAD(+)</name>
        <dbReference type="ChEBI" id="CHEBI:57540"/>
    </ligand>
</feature>
<feature type="binding site" evidence="1">
    <location>
        <position position="151"/>
    </location>
    <ligand>
        <name>NAD(+)</name>
        <dbReference type="ChEBI" id="CHEBI:57540"/>
    </ligand>
</feature>
<feature type="binding site" evidence="1">
    <location>
        <position position="186"/>
    </location>
    <ligand>
        <name>NAD(+)</name>
        <dbReference type="ChEBI" id="CHEBI:57540"/>
    </ligand>
</feature>
<feature type="binding site" evidence="1">
    <location>
        <position position="226"/>
    </location>
    <ligand>
        <name>NAD(+)</name>
        <dbReference type="ChEBI" id="CHEBI:57540"/>
    </ligand>
</feature>
<sequence>MKFTVASRGDTLSDELCDTIKTRLLAADLAHDSDKPDIVITVGGDGTFLEAFHSYAHRLEETAFVGIHTGHLGFYADWVPEETEHLITHIIKTPFQIVEYPLLEVVIRYRGGQREPRRHLALNESTIKSTEGSLVCTVEIKGEAFETFRGDGLCMSTPSGSTAYNKALGGAILHPSLASIQLSEMASINNRIYRTLGSPLVLPQHHTCLLKLLNDVSVQVTIDHFNVPVFAENVDTIQVRVAEEKVRFARFRPFPFWKRVKEAFISE</sequence>